<gene>
    <name evidence="1" type="primary">obg</name>
    <name type="ordered locus">RC1_0446</name>
</gene>
<reference key="1">
    <citation type="submission" date="2007-03" db="EMBL/GenBank/DDBJ databases">
        <title>Genome sequence of Rhodospirillum centenum.</title>
        <authorList>
            <person name="Touchman J.W."/>
            <person name="Bauer C."/>
            <person name="Blankenship R.E."/>
        </authorList>
    </citation>
    <scope>NUCLEOTIDE SEQUENCE [LARGE SCALE GENOMIC DNA]</scope>
    <source>
        <strain>ATCC 51521 / SW</strain>
    </source>
</reference>
<protein>
    <recommendedName>
        <fullName evidence="1">GTPase Obg</fullName>
        <ecNumber evidence="1">3.6.5.-</ecNumber>
    </recommendedName>
    <alternativeName>
        <fullName evidence="1">GTP-binding protein Obg</fullName>
    </alternativeName>
</protein>
<evidence type="ECO:0000255" key="1">
    <source>
        <dbReference type="HAMAP-Rule" id="MF_01454"/>
    </source>
</evidence>
<evidence type="ECO:0000255" key="2">
    <source>
        <dbReference type="PROSITE-ProRule" id="PRU01231"/>
    </source>
</evidence>
<sequence>MKFLDQCKIYLKSGDGGPGAVAFRREKFIEFGGPDGGNGGRGGDVIIEAVDGLNTLIDYRYQQHFKAKRGGHGMGRSRSGAKGEDAVLRVPVGTQVLDDDQETVLADMTEVGQRIVLLKGGDGGFGNEHYKSSTNRAPRQFTPGWPGEERWVWLRLKLIADAGLVGLPNAGKSTFLAAVSRARPKIADYPFTTLTPNLGVVQAGEEEFVLADIPGLIEGAHEGRGIGTRFLGHVERTRVLLHLVDGTQEDVQLAYRTIRRELRLYGGGLAEKPEIVALNKIDALTPEELEFKRTKLRRSAKKPVMLLSGATGQGVQEMLFELLRHIREARGAEAEAAEEIERRIRYAPIEE</sequence>
<proteinExistence type="inferred from homology"/>
<feature type="chain" id="PRO_0000386196" description="GTPase Obg">
    <location>
        <begin position="1"/>
        <end position="351"/>
    </location>
</feature>
<feature type="domain" description="Obg" evidence="2">
    <location>
        <begin position="1"/>
        <end position="159"/>
    </location>
</feature>
<feature type="domain" description="OBG-type G" evidence="1">
    <location>
        <begin position="160"/>
        <end position="327"/>
    </location>
</feature>
<feature type="binding site" evidence="1">
    <location>
        <begin position="166"/>
        <end position="173"/>
    </location>
    <ligand>
        <name>GTP</name>
        <dbReference type="ChEBI" id="CHEBI:37565"/>
    </ligand>
</feature>
<feature type="binding site" evidence="1">
    <location>
        <position position="173"/>
    </location>
    <ligand>
        <name>Mg(2+)</name>
        <dbReference type="ChEBI" id="CHEBI:18420"/>
    </ligand>
</feature>
<feature type="binding site" evidence="1">
    <location>
        <begin position="191"/>
        <end position="195"/>
    </location>
    <ligand>
        <name>GTP</name>
        <dbReference type="ChEBI" id="CHEBI:37565"/>
    </ligand>
</feature>
<feature type="binding site" evidence="1">
    <location>
        <position position="193"/>
    </location>
    <ligand>
        <name>Mg(2+)</name>
        <dbReference type="ChEBI" id="CHEBI:18420"/>
    </ligand>
</feature>
<feature type="binding site" evidence="1">
    <location>
        <begin position="212"/>
        <end position="215"/>
    </location>
    <ligand>
        <name>GTP</name>
        <dbReference type="ChEBI" id="CHEBI:37565"/>
    </ligand>
</feature>
<feature type="binding site" evidence="1">
    <location>
        <begin position="279"/>
        <end position="282"/>
    </location>
    <ligand>
        <name>GTP</name>
        <dbReference type="ChEBI" id="CHEBI:37565"/>
    </ligand>
</feature>
<feature type="binding site" evidence="1">
    <location>
        <begin position="308"/>
        <end position="310"/>
    </location>
    <ligand>
        <name>GTP</name>
        <dbReference type="ChEBI" id="CHEBI:37565"/>
    </ligand>
</feature>
<name>OBG_RHOCS</name>
<keyword id="KW-0963">Cytoplasm</keyword>
<keyword id="KW-0342">GTP-binding</keyword>
<keyword id="KW-0378">Hydrolase</keyword>
<keyword id="KW-0460">Magnesium</keyword>
<keyword id="KW-0479">Metal-binding</keyword>
<keyword id="KW-0547">Nucleotide-binding</keyword>
<keyword id="KW-1185">Reference proteome</keyword>
<dbReference type="EC" id="3.6.5.-" evidence="1"/>
<dbReference type="EMBL" id="CP000613">
    <property type="protein sequence ID" value="ACI97885.1"/>
    <property type="molecule type" value="Genomic_DNA"/>
</dbReference>
<dbReference type="RefSeq" id="WP_012565677.1">
    <property type="nucleotide sequence ID" value="NC_011420.2"/>
</dbReference>
<dbReference type="SMR" id="B6IQZ9"/>
<dbReference type="STRING" id="414684.RC1_0446"/>
<dbReference type="KEGG" id="rce:RC1_0446"/>
<dbReference type="eggNOG" id="COG0536">
    <property type="taxonomic scope" value="Bacteria"/>
</dbReference>
<dbReference type="HOGENOM" id="CLU_011747_2_0_5"/>
<dbReference type="OrthoDB" id="9807318at2"/>
<dbReference type="Proteomes" id="UP000001591">
    <property type="component" value="Chromosome"/>
</dbReference>
<dbReference type="GO" id="GO:0005737">
    <property type="term" value="C:cytoplasm"/>
    <property type="evidence" value="ECO:0007669"/>
    <property type="project" value="UniProtKB-SubCell"/>
</dbReference>
<dbReference type="GO" id="GO:0005525">
    <property type="term" value="F:GTP binding"/>
    <property type="evidence" value="ECO:0007669"/>
    <property type="project" value="UniProtKB-UniRule"/>
</dbReference>
<dbReference type="GO" id="GO:0003924">
    <property type="term" value="F:GTPase activity"/>
    <property type="evidence" value="ECO:0007669"/>
    <property type="project" value="UniProtKB-UniRule"/>
</dbReference>
<dbReference type="GO" id="GO:0000287">
    <property type="term" value="F:magnesium ion binding"/>
    <property type="evidence" value="ECO:0007669"/>
    <property type="project" value="InterPro"/>
</dbReference>
<dbReference type="GO" id="GO:0042254">
    <property type="term" value="P:ribosome biogenesis"/>
    <property type="evidence" value="ECO:0007669"/>
    <property type="project" value="UniProtKB-UniRule"/>
</dbReference>
<dbReference type="CDD" id="cd01898">
    <property type="entry name" value="Obg"/>
    <property type="match status" value="1"/>
</dbReference>
<dbReference type="FunFam" id="2.70.210.12:FF:000001">
    <property type="entry name" value="GTPase Obg"/>
    <property type="match status" value="1"/>
</dbReference>
<dbReference type="Gene3D" id="2.70.210.12">
    <property type="entry name" value="GTP1/OBG domain"/>
    <property type="match status" value="1"/>
</dbReference>
<dbReference type="Gene3D" id="3.40.50.300">
    <property type="entry name" value="P-loop containing nucleotide triphosphate hydrolases"/>
    <property type="match status" value="1"/>
</dbReference>
<dbReference type="HAMAP" id="MF_01454">
    <property type="entry name" value="GTPase_Obg"/>
    <property type="match status" value="1"/>
</dbReference>
<dbReference type="InterPro" id="IPR031167">
    <property type="entry name" value="G_OBG"/>
</dbReference>
<dbReference type="InterPro" id="IPR006073">
    <property type="entry name" value="GTP-bd"/>
</dbReference>
<dbReference type="InterPro" id="IPR014100">
    <property type="entry name" value="GTP-bd_Obg/CgtA"/>
</dbReference>
<dbReference type="InterPro" id="IPR006074">
    <property type="entry name" value="GTP1-OBG_CS"/>
</dbReference>
<dbReference type="InterPro" id="IPR006169">
    <property type="entry name" value="GTP1_OBG_dom"/>
</dbReference>
<dbReference type="InterPro" id="IPR036726">
    <property type="entry name" value="GTP1_OBG_dom_sf"/>
</dbReference>
<dbReference type="InterPro" id="IPR045086">
    <property type="entry name" value="OBG_GTPase"/>
</dbReference>
<dbReference type="InterPro" id="IPR027417">
    <property type="entry name" value="P-loop_NTPase"/>
</dbReference>
<dbReference type="NCBIfam" id="TIGR02729">
    <property type="entry name" value="Obg_CgtA"/>
    <property type="match status" value="1"/>
</dbReference>
<dbReference type="NCBIfam" id="NF008955">
    <property type="entry name" value="PRK12297.1"/>
    <property type="match status" value="1"/>
</dbReference>
<dbReference type="NCBIfam" id="NF008956">
    <property type="entry name" value="PRK12299.1"/>
    <property type="match status" value="1"/>
</dbReference>
<dbReference type="PANTHER" id="PTHR11702">
    <property type="entry name" value="DEVELOPMENTALLY REGULATED GTP-BINDING PROTEIN-RELATED"/>
    <property type="match status" value="1"/>
</dbReference>
<dbReference type="PANTHER" id="PTHR11702:SF31">
    <property type="entry name" value="MITOCHONDRIAL RIBOSOME-ASSOCIATED GTPASE 2"/>
    <property type="match status" value="1"/>
</dbReference>
<dbReference type="Pfam" id="PF01018">
    <property type="entry name" value="GTP1_OBG"/>
    <property type="match status" value="1"/>
</dbReference>
<dbReference type="Pfam" id="PF01926">
    <property type="entry name" value="MMR_HSR1"/>
    <property type="match status" value="1"/>
</dbReference>
<dbReference type="PIRSF" id="PIRSF002401">
    <property type="entry name" value="GTP_bd_Obg/CgtA"/>
    <property type="match status" value="1"/>
</dbReference>
<dbReference type="PRINTS" id="PR00326">
    <property type="entry name" value="GTP1OBG"/>
</dbReference>
<dbReference type="SUPFAM" id="SSF82051">
    <property type="entry name" value="Obg GTP-binding protein N-terminal domain"/>
    <property type="match status" value="1"/>
</dbReference>
<dbReference type="SUPFAM" id="SSF52540">
    <property type="entry name" value="P-loop containing nucleoside triphosphate hydrolases"/>
    <property type="match status" value="1"/>
</dbReference>
<dbReference type="PROSITE" id="PS51710">
    <property type="entry name" value="G_OBG"/>
    <property type="match status" value="1"/>
</dbReference>
<dbReference type="PROSITE" id="PS00905">
    <property type="entry name" value="GTP1_OBG"/>
    <property type="match status" value="1"/>
</dbReference>
<dbReference type="PROSITE" id="PS51883">
    <property type="entry name" value="OBG"/>
    <property type="match status" value="1"/>
</dbReference>
<comment type="function">
    <text evidence="1">An essential GTPase which binds GTP, GDP and possibly (p)ppGpp with moderate affinity, with high nucleotide exchange rates and a fairly low GTP hydrolysis rate. Plays a role in control of the cell cycle, stress response, ribosome biogenesis and in those bacteria that undergo differentiation, in morphogenesis control.</text>
</comment>
<comment type="cofactor">
    <cofactor evidence="1">
        <name>Mg(2+)</name>
        <dbReference type="ChEBI" id="CHEBI:18420"/>
    </cofactor>
</comment>
<comment type="subunit">
    <text evidence="1">Monomer.</text>
</comment>
<comment type="subcellular location">
    <subcellularLocation>
        <location evidence="1">Cytoplasm</location>
    </subcellularLocation>
</comment>
<comment type="similarity">
    <text evidence="1">Belongs to the TRAFAC class OBG-HflX-like GTPase superfamily. OBG GTPase family.</text>
</comment>
<organism>
    <name type="scientific">Rhodospirillum centenum (strain ATCC 51521 / SW)</name>
    <dbReference type="NCBI Taxonomy" id="414684"/>
    <lineage>
        <taxon>Bacteria</taxon>
        <taxon>Pseudomonadati</taxon>
        <taxon>Pseudomonadota</taxon>
        <taxon>Alphaproteobacteria</taxon>
        <taxon>Rhodospirillales</taxon>
        <taxon>Rhodospirillaceae</taxon>
        <taxon>Rhodospirillum</taxon>
    </lineage>
</organism>
<accession>B6IQZ9</accession>